<feature type="signal peptide" evidence="4">
    <location>
        <begin position="1"/>
        <end position="18"/>
    </location>
</feature>
<feature type="propeptide" id="PRO_0000043292" evidence="1">
    <location>
        <begin position="19"/>
        <end position="125"/>
    </location>
</feature>
<feature type="chain" id="PRO_0000043293" description="Venom nerve growth factor 2">
    <location>
        <begin position="126"/>
        <end position="241"/>
    </location>
</feature>
<feature type="region of interest" description="Disordered" evidence="5">
    <location>
        <begin position="47"/>
        <end position="67"/>
    </location>
</feature>
<feature type="disulfide bond" evidence="2">
    <location>
        <begin position="139"/>
        <end position="203"/>
    </location>
</feature>
<feature type="disulfide bond" evidence="2">
    <location>
        <begin position="181"/>
        <end position="231"/>
    </location>
</feature>
<feature type="disulfide bond" evidence="2">
    <location>
        <begin position="191"/>
        <end position="233"/>
    </location>
</feature>
<evidence type="ECO:0000250" key="1"/>
<evidence type="ECO:0000250" key="2">
    <source>
        <dbReference type="UniProtKB" id="P61898"/>
    </source>
</evidence>
<evidence type="ECO:0000250" key="3">
    <source>
        <dbReference type="UniProtKB" id="P61899"/>
    </source>
</evidence>
<evidence type="ECO:0000255" key="4"/>
<evidence type="ECO:0000256" key="5">
    <source>
        <dbReference type="SAM" id="MobiDB-lite"/>
    </source>
</evidence>
<evidence type="ECO:0000305" key="6"/>
<organism>
    <name type="scientific">Naja sputatrix</name>
    <name type="common">Malayan spitting cobra</name>
    <name type="synonym">Naja naja sputatrix</name>
    <dbReference type="NCBI Taxonomy" id="33626"/>
    <lineage>
        <taxon>Eukaryota</taxon>
        <taxon>Metazoa</taxon>
        <taxon>Chordata</taxon>
        <taxon>Craniata</taxon>
        <taxon>Vertebrata</taxon>
        <taxon>Euteleostomi</taxon>
        <taxon>Lepidosauria</taxon>
        <taxon>Squamata</taxon>
        <taxon>Bifurcata</taxon>
        <taxon>Unidentata</taxon>
        <taxon>Episquamata</taxon>
        <taxon>Toxicofera</taxon>
        <taxon>Serpentes</taxon>
        <taxon>Colubroidea</taxon>
        <taxon>Elapidae</taxon>
        <taxon>Elapinae</taxon>
        <taxon>Naja</taxon>
    </lineage>
</organism>
<name>NGFV2_NAJSP</name>
<protein>
    <recommendedName>
        <fullName>Venom nerve growth factor 2</fullName>
        <shortName>v-NGF-2</shortName>
        <shortName>vNGF-2</shortName>
    </recommendedName>
    <alternativeName>
        <fullName>Nerve growth factor II</fullName>
    </alternativeName>
</protein>
<keyword id="KW-0165">Cleavage on pair of basic residues</keyword>
<keyword id="KW-1015">Disulfide bond</keyword>
<keyword id="KW-0339">Growth factor</keyword>
<keyword id="KW-0446">Lipid-binding</keyword>
<keyword id="KW-0481">Metalloenzyme inhibitor</keyword>
<keyword id="KW-0483">Metalloprotease inhibitor</keyword>
<keyword id="KW-0646">Protease inhibitor</keyword>
<keyword id="KW-0964">Secreted</keyword>
<keyword id="KW-0732">Signal</keyword>
<keyword id="KW-0800">Toxin</keyword>
<accession>Q5YF89</accession>
<sequence>MSMLCYTLITAFLIGIWAAPKSEDNVPLGSPATSDLSDTSCAQTHEGLKTSRNTDQRHPAPQKAEDQELRTAANIIVDPKLFQKRQFQSPRVLFSTQPPLLSRDEESVEFLDNEDSLNRNIRAKREDHPVHNLGEHSVCDSVSAWVTKTTATDIKGNTVTVMENVNLDNKVYKQYFFETKCKNPNPVPSGCRGIDSSHWNSYCTETDTFIKALTMEGNQASWRFIRIDTACVCVITKKTGN</sequence>
<comment type="function">
    <text evidence="2 3">Nerve growth factor is important for the development and maintenance of the sympathetic and sensory nervous systems. It stimulates division and differentiation of sympathetic and embryonic sensory neurons as well as basal forebrain cholinergic neurons in the brain. Its relevance in the snake venom is not clear. However, it has been shown to inhibit metalloproteinase-dependent proteolysis of platelet glycoprotein Ib alpha, suggesting a metalloproteinase inhibition to prevent metalloprotease autodigestion and/or protection against prey proteases (By similarity). Binds a lipid between the two protein chains in the homodimer. The lipid-bound form promotes histamine relase from mouse mast cells, contrary to the lipid-free form (By similarity).</text>
</comment>
<comment type="subunit">
    <text evidence="2">Homodimer; non-covalently linked.</text>
</comment>
<comment type="subcellular location">
    <subcellularLocation>
        <location evidence="2">Secreted</location>
    </subcellularLocation>
</comment>
<comment type="tissue specificity">
    <text>Expressed by the venom gland.</text>
</comment>
<comment type="similarity">
    <text evidence="6">Belongs to the NGF-beta family.</text>
</comment>
<reference key="1">
    <citation type="journal article" date="2004" name="Biochem. J.">
        <title>Sputa nerve growth factor forms a preferable substitute to mouse 7S-beta nerve growth factor.</title>
        <authorList>
            <person name="Koh D.C.-I."/>
            <person name="Armugam A."/>
            <person name="Jeyaseelan K."/>
        </authorList>
    </citation>
    <scope>NUCLEOTIDE SEQUENCE [MRNA]</scope>
    <source>
        <tissue>Venom gland</tissue>
    </source>
</reference>
<dbReference type="EMBL" id="AY527216">
    <property type="protein sequence ID" value="AAS94269.1"/>
    <property type="molecule type" value="mRNA"/>
</dbReference>
<dbReference type="SMR" id="Q5YF89"/>
<dbReference type="GO" id="GO:0030424">
    <property type="term" value="C:axon"/>
    <property type="evidence" value="ECO:0007669"/>
    <property type="project" value="TreeGrafter"/>
</dbReference>
<dbReference type="GO" id="GO:0030425">
    <property type="term" value="C:dendrite"/>
    <property type="evidence" value="ECO:0007669"/>
    <property type="project" value="TreeGrafter"/>
</dbReference>
<dbReference type="GO" id="GO:0005615">
    <property type="term" value="C:extracellular space"/>
    <property type="evidence" value="ECO:0007669"/>
    <property type="project" value="TreeGrafter"/>
</dbReference>
<dbReference type="GO" id="GO:0008021">
    <property type="term" value="C:synaptic vesicle"/>
    <property type="evidence" value="ECO:0007669"/>
    <property type="project" value="TreeGrafter"/>
</dbReference>
<dbReference type="GO" id="GO:0008083">
    <property type="term" value="F:growth factor activity"/>
    <property type="evidence" value="ECO:0007669"/>
    <property type="project" value="UniProtKB-KW"/>
</dbReference>
<dbReference type="GO" id="GO:0008289">
    <property type="term" value="F:lipid binding"/>
    <property type="evidence" value="ECO:0007669"/>
    <property type="project" value="UniProtKB-KW"/>
</dbReference>
<dbReference type="GO" id="GO:0008191">
    <property type="term" value="F:metalloendopeptidase inhibitor activity"/>
    <property type="evidence" value="ECO:0000250"/>
    <property type="project" value="UniProtKB"/>
</dbReference>
<dbReference type="GO" id="GO:0005163">
    <property type="term" value="F:nerve growth factor receptor binding"/>
    <property type="evidence" value="ECO:0007669"/>
    <property type="project" value="TreeGrafter"/>
</dbReference>
<dbReference type="GO" id="GO:0090729">
    <property type="term" value="F:toxin activity"/>
    <property type="evidence" value="ECO:0007669"/>
    <property type="project" value="UniProtKB-KW"/>
</dbReference>
<dbReference type="GO" id="GO:0007169">
    <property type="term" value="P:cell surface receptor protein tyrosine kinase signaling pathway"/>
    <property type="evidence" value="ECO:0007669"/>
    <property type="project" value="TreeGrafter"/>
</dbReference>
<dbReference type="GO" id="GO:0050804">
    <property type="term" value="P:modulation of chemical synaptic transmission"/>
    <property type="evidence" value="ECO:0007669"/>
    <property type="project" value="TreeGrafter"/>
</dbReference>
<dbReference type="GO" id="GO:0043524">
    <property type="term" value="P:negative regulation of neuron apoptotic process"/>
    <property type="evidence" value="ECO:0007669"/>
    <property type="project" value="TreeGrafter"/>
</dbReference>
<dbReference type="GO" id="GO:0021675">
    <property type="term" value="P:nerve development"/>
    <property type="evidence" value="ECO:0007669"/>
    <property type="project" value="TreeGrafter"/>
</dbReference>
<dbReference type="GO" id="GO:0038180">
    <property type="term" value="P:nerve growth factor signaling pathway"/>
    <property type="evidence" value="ECO:0007669"/>
    <property type="project" value="TreeGrafter"/>
</dbReference>
<dbReference type="GO" id="GO:0048812">
    <property type="term" value="P:neuron projection morphogenesis"/>
    <property type="evidence" value="ECO:0007669"/>
    <property type="project" value="TreeGrafter"/>
</dbReference>
<dbReference type="FunFam" id="2.10.90.10:FF:000002">
    <property type="entry name" value="Brain-derived neurotrophic factor"/>
    <property type="match status" value="1"/>
</dbReference>
<dbReference type="Gene3D" id="2.10.90.10">
    <property type="entry name" value="Cystine-knot cytokines"/>
    <property type="match status" value="1"/>
</dbReference>
<dbReference type="InterPro" id="IPR029034">
    <property type="entry name" value="Cystine-knot_cytokine"/>
</dbReference>
<dbReference type="InterPro" id="IPR020408">
    <property type="entry name" value="Nerve_growth_factor-like"/>
</dbReference>
<dbReference type="InterPro" id="IPR002072">
    <property type="entry name" value="Nerve_growth_factor-rel"/>
</dbReference>
<dbReference type="InterPro" id="IPR020425">
    <property type="entry name" value="Nerve_growth_factor_bsu"/>
</dbReference>
<dbReference type="InterPro" id="IPR019846">
    <property type="entry name" value="Nerve_growth_factor_CS"/>
</dbReference>
<dbReference type="InterPro" id="IPR020433">
    <property type="entry name" value="Venom_nerve_growth_factor"/>
</dbReference>
<dbReference type="PANTHER" id="PTHR11589:SF10">
    <property type="entry name" value="BETA-NERVE GROWTH FACTOR"/>
    <property type="match status" value="1"/>
</dbReference>
<dbReference type="PANTHER" id="PTHR11589">
    <property type="entry name" value="NERVE GROWTH FACTOR NGF -RELATED"/>
    <property type="match status" value="1"/>
</dbReference>
<dbReference type="Pfam" id="PF00243">
    <property type="entry name" value="NGF"/>
    <property type="match status" value="1"/>
</dbReference>
<dbReference type="PIRSF" id="PIRSF001789">
    <property type="entry name" value="NGF"/>
    <property type="match status" value="1"/>
</dbReference>
<dbReference type="PRINTS" id="PR00268">
    <property type="entry name" value="NGF"/>
</dbReference>
<dbReference type="PRINTS" id="PR01913">
    <property type="entry name" value="NGFBETA"/>
</dbReference>
<dbReference type="PRINTS" id="PR01917">
    <property type="entry name" value="VENOMNGF"/>
</dbReference>
<dbReference type="SMART" id="SM00140">
    <property type="entry name" value="NGF"/>
    <property type="match status" value="1"/>
</dbReference>
<dbReference type="SUPFAM" id="SSF57501">
    <property type="entry name" value="Cystine-knot cytokines"/>
    <property type="match status" value="1"/>
</dbReference>
<dbReference type="PROSITE" id="PS00248">
    <property type="entry name" value="NGF_1"/>
    <property type="match status" value="1"/>
</dbReference>
<dbReference type="PROSITE" id="PS50270">
    <property type="entry name" value="NGF_2"/>
    <property type="match status" value="1"/>
</dbReference>
<proteinExistence type="evidence at transcript level"/>